<feature type="chain" id="PRO_0000336178" description="UPF0102 protein FTN_0424">
    <location>
        <begin position="1"/>
        <end position="117"/>
    </location>
</feature>
<organism>
    <name type="scientific">Francisella tularensis subsp. novicida (strain U112)</name>
    <dbReference type="NCBI Taxonomy" id="401614"/>
    <lineage>
        <taxon>Bacteria</taxon>
        <taxon>Pseudomonadati</taxon>
        <taxon>Pseudomonadota</taxon>
        <taxon>Gammaproteobacteria</taxon>
        <taxon>Thiotrichales</taxon>
        <taxon>Francisellaceae</taxon>
        <taxon>Francisella</taxon>
    </lineage>
</organism>
<gene>
    <name type="ordered locus">FTN_0424</name>
</gene>
<accession>A0Q512</accession>
<evidence type="ECO:0000255" key="1">
    <source>
        <dbReference type="HAMAP-Rule" id="MF_00048"/>
    </source>
</evidence>
<proteinExistence type="inferred from homology"/>
<sequence length="117" mass="13602">MQTIEIGNKAELQACKFLHTQELEILAHNFKALPYGEIDIIALDKDTLVFIEVKYRSKTKFAQAEEMLTYSKQQKLVNSASIYLQHNPQYQDYQCRFDLIAINESNINWIKNAFGVI</sequence>
<protein>
    <recommendedName>
        <fullName evidence="1">UPF0102 protein FTN_0424</fullName>
    </recommendedName>
</protein>
<reference key="1">
    <citation type="journal article" date="2007" name="Genome Biol.">
        <title>Comparison of Francisella tularensis genomes reveals evolutionary events associated with the emergence of human pathogenic strains.</title>
        <authorList>
            <person name="Rohmer L."/>
            <person name="Fong C."/>
            <person name="Abmayr S."/>
            <person name="Wasnick M."/>
            <person name="Larson Freeman T.J."/>
            <person name="Radey M."/>
            <person name="Guina T."/>
            <person name="Svensson K."/>
            <person name="Hayden H.S."/>
            <person name="Jacobs M."/>
            <person name="Gallagher L.A."/>
            <person name="Manoil C."/>
            <person name="Ernst R.K."/>
            <person name="Drees B."/>
            <person name="Buckley D."/>
            <person name="Haugen E."/>
            <person name="Bovee D."/>
            <person name="Zhou Y."/>
            <person name="Chang J."/>
            <person name="Levy R."/>
            <person name="Lim R."/>
            <person name="Gillett W."/>
            <person name="Guenthener D."/>
            <person name="Kang A."/>
            <person name="Shaffer S.A."/>
            <person name="Taylor G."/>
            <person name="Chen J."/>
            <person name="Gallis B."/>
            <person name="D'Argenio D.A."/>
            <person name="Forsman M."/>
            <person name="Olson M.V."/>
            <person name="Goodlett D.R."/>
            <person name="Kaul R."/>
            <person name="Miller S.I."/>
            <person name="Brittnacher M.J."/>
        </authorList>
    </citation>
    <scope>NUCLEOTIDE SEQUENCE [LARGE SCALE GENOMIC DNA]</scope>
    <source>
        <strain>U112</strain>
    </source>
</reference>
<comment type="similarity">
    <text evidence="1">Belongs to the UPF0102 family.</text>
</comment>
<dbReference type="EMBL" id="CP000439">
    <property type="protein sequence ID" value="ABK89327.1"/>
    <property type="molecule type" value="Genomic_DNA"/>
</dbReference>
<dbReference type="RefSeq" id="WP_003033109.1">
    <property type="nucleotide sequence ID" value="NC_008601.1"/>
</dbReference>
<dbReference type="SMR" id="A0Q512"/>
<dbReference type="KEGG" id="ftn:FTN_0424"/>
<dbReference type="KEGG" id="ftx:AW25_1611"/>
<dbReference type="BioCyc" id="FTUL401614:G1G75-443-MONOMER"/>
<dbReference type="Proteomes" id="UP000000762">
    <property type="component" value="Chromosome"/>
</dbReference>
<dbReference type="GO" id="GO:0003676">
    <property type="term" value="F:nucleic acid binding"/>
    <property type="evidence" value="ECO:0007669"/>
    <property type="project" value="InterPro"/>
</dbReference>
<dbReference type="Gene3D" id="3.40.1350.10">
    <property type="match status" value="1"/>
</dbReference>
<dbReference type="HAMAP" id="MF_00048">
    <property type="entry name" value="UPF0102"/>
    <property type="match status" value="1"/>
</dbReference>
<dbReference type="InterPro" id="IPR011335">
    <property type="entry name" value="Restrct_endonuc-II-like"/>
</dbReference>
<dbReference type="InterPro" id="IPR011856">
    <property type="entry name" value="tRNA_endonuc-like_dom_sf"/>
</dbReference>
<dbReference type="InterPro" id="IPR003509">
    <property type="entry name" value="UPF0102_YraN-like"/>
</dbReference>
<dbReference type="NCBIfam" id="NF009150">
    <property type="entry name" value="PRK12497.1-3"/>
    <property type="match status" value="1"/>
</dbReference>
<dbReference type="NCBIfam" id="NF011275">
    <property type="entry name" value="PRK14682.1"/>
    <property type="match status" value="1"/>
</dbReference>
<dbReference type="NCBIfam" id="TIGR00252">
    <property type="entry name" value="YraN family protein"/>
    <property type="match status" value="1"/>
</dbReference>
<dbReference type="PANTHER" id="PTHR34039">
    <property type="entry name" value="UPF0102 PROTEIN YRAN"/>
    <property type="match status" value="1"/>
</dbReference>
<dbReference type="PANTHER" id="PTHR34039:SF1">
    <property type="entry name" value="UPF0102 PROTEIN YRAN"/>
    <property type="match status" value="1"/>
</dbReference>
<dbReference type="Pfam" id="PF02021">
    <property type="entry name" value="UPF0102"/>
    <property type="match status" value="1"/>
</dbReference>
<dbReference type="SUPFAM" id="SSF52980">
    <property type="entry name" value="Restriction endonuclease-like"/>
    <property type="match status" value="1"/>
</dbReference>
<name>Y424_FRATN</name>